<keyword id="KW-0963">Cytoplasm</keyword>
<keyword id="KW-0290">Folate-binding</keyword>
<keyword id="KW-0819">tRNA processing</keyword>
<reference key="1">
    <citation type="journal article" date="2006" name="Proc. Natl. Acad. Sci. U.S.A.">
        <title>Identification of genes subject to positive selection in uropathogenic strains of Escherichia coli: a comparative genomics approach.</title>
        <authorList>
            <person name="Chen S.L."/>
            <person name="Hung C.-S."/>
            <person name="Xu J."/>
            <person name="Reigstad C.S."/>
            <person name="Magrini V."/>
            <person name="Sabo A."/>
            <person name="Blasiar D."/>
            <person name="Bieri T."/>
            <person name="Meyer R.R."/>
            <person name="Ozersky P."/>
            <person name="Armstrong J.R."/>
            <person name="Fulton R.S."/>
            <person name="Latreille J.P."/>
            <person name="Spieth J."/>
            <person name="Hooton T.M."/>
            <person name="Mardis E.R."/>
            <person name="Hultgren S.J."/>
            <person name="Gordon J.I."/>
        </authorList>
    </citation>
    <scope>NUCLEOTIDE SEQUENCE [LARGE SCALE GENOMIC DNA]</scope>
    <source>
        <strain>UTI89 / UPEC</strain>
    </source>
</reference>
<evidence type="ECO:0000250" key="1"/>
<evidence type="ECO:0000255" key="2">
    <source>
        <dbReference type="HAMAP-Rule" id="MF_01175"/>
    </source>
</evidence>
<proteinExistence type="inferred from homology"/>
<sequence>MAFTPFPPRQPTASARLPLTLMTLDDWALATITGADSEKYMQGQVTADVSQMTEDQHLLAAHCDAKGKMWSNLRLFRDGDGFAWIERRSVREPQLTELKKYAVFSKVTIAPDDERVLLGVAGFQARAALANLFSELPSREKQVVKEGATTLLWFEHPAERFLIVTDEATANMLTDKLRGEAELNNSQQWLALNIEAGFPVIDAANSGQFIPQATNLQALGGISFKKGCYTGQEMVARAKFRGANKRALWLLKGSASRLPEAGEDLELKMGENWRRTGTVLAAVKLEDGQVVVQVVMNNDMEPDSIFRVRDDANTLRIEPLPYSLEE</sequence>
<protein>
    <recommendedName>
        <fullName evidence="2">tRNA-modifying protein YgfZ</fullName>
    </recommendedName>
</protein>
<name>YGFZ_ECOUT</name>
<comment type="function">
    <text evidence="2">Folate-binding protein involved in regulating the level of ATP-DnaA and in the modification of some tRNAs. It is probably a key factor in regulatory networks that act via tRNA modification, such as initiation of chromosomal replication.</text>
</comment>
<comment type="subcellular location">
    <subcellularLocation>
        <location evidence="2">Cytoplasm</location>
    </subcellularLocation>
</comment>
<comment type="similarity">
    <text evidence="2">Belongs to the tRNA-modifying YgfZ family.</text>
</comment>
<dbReference type="EMBL" id="CP000243">
    <property type="protein sequence ID" value="ABE08732.1"/>
    <property type="molecule type" value="Genomic_DNA"/>
</dbReference>
<dbReference type="RefSeq" id="WP_000886078.1">
    <property type="nucleotide sequence ID" value="NZ_CP064825.1"/>
</dbReference>
<dbReference type="SMR" id="Q1R7D2"/>
<dbReference type="KEGG" id="eci:UTI89_C3284"/>
<dbReference type="HOGENOM" id="CLU_007884_6_1_6"/>
<dbReference type="Proteomes" id="UP000001952">
    <property type="component" value="Chromosome"/>
</dbReference>
<dbReference type="GO" id="GO:0005737">
    <property type="term" value="C:cytoplasm"/>
    <property type="evidence" value="ECO:0007669"/>
    <property type="project" value="UniProtKB-SubCell"/>
</dbReference>
<dbReference type="GO" id="GO:0005542">
    <property type="term" value="F:folic acid binding"/>
    <property type="evidence" value="ECO:0007669"/>
    <property type="project" value="UniProtKB-UniRule"/>
</dbReference>
<dbReference type="GO" id="GO:0016226">
    <property type="term" value="P:iron-sulfur cluster assembly"/>
    <property type="evidence" value="ECO:0007669"/>
    <property type="project" value="TreeGrafter"/>
</dbReference>
<dbReference type="GO" id="GO:0009451">
    <property type="term" value="P:RNA modification"/>
    <property type="evidence" value="ECO:0007669"/>
    <property type="project" value="InterPro"/>
</dbReference>
<dbReference type="GO" id="GO:0008033">
    <property type="term" value="P:tRNA processing"/>
    <property type="evidence" value="ECO:0007669"/>
    <property type="project" value="UniProtKB-UniRule"/>
</dbReference>
<dbReference type="FunFam" id="2.40.30.160:FF:000001">
    <property type="entry name" value="tRNA-modifying protein YgfZ"/>
    <property type="match status" value="1"/>
</dbReference>
<dbReference type="FunFam" id="3.30.70.1400:FF:000002">
    <property type="entry name" value="tRNA-modifying protein YgfZ"/>
    <property type="match status" value="1"/>
</dbReference>
<dbReference type="FunFam" id="3.30.70.1630:FF:000001">
    <property type="entry name" value="tRNA-modifying protein YgfZ"/>
    <property type="match status" value="1"/>
</dbReference>
<dbReference type="Gene3D" id="2.40.30.160">
    <property type="match status" value="1"/>
</dbReference>
<dbReference type="Gene3D" id="3.30.70.1630">
    <property type="match status" value="1"/>
</dbReference>
<dbReference type="Gene3D" id="3.30.70.1400">
    <property type="entry name" value="Aminomethyltransferase beta-barrel domains"/>
    <property type="match status" value="1"/>
</dbReference>
<dbReference type="HAMAP" id="MF_01175">
    <property type="entry name" value="tRNA_modifying_YgfZ"/>
    <property type="match status" value="1"/>
</dbReference>
<dbReference type="InterPro" id="IPR006222">
    <property type="entry name" value="GCV_T_N"/>
</dbReference>
<dbReference type="InterPro" id="IPR029043">
    <property type="entry name" value="GcvT/YgfZ_C"/>
</dbReference>
<dbReference type="InterPro" id="IPR023758">
    <property type="entry name" value="tRNA-modifying_YgfZ"/>
</dbReference>
<dbReference type="InterPro" id="IPR045179">
    <property type="entry name" value="YgfZ/GcvT"/>
</dbReference>
<dbReference type="InterPro" id="IPR017703">
    <property type="entry name" value="YgfZ/GcvT_CS"/>
</dbReference>
<dbReference type="InterPro" id="IPR048451">
    <property type="entry name" value="YgfZ_barrel"/>
</dbReference>
<dbReference type="NCBIfam" id="NF007110">
    <property type="entry name" value="PRK09559.1"/>
    <property type="match status" value="1"/>
</dbReference>
<dbReference type="NCBIfam" id="TIGR03317">
    <property type="entry name" value="ygfZ_signature"/>
    <property type="match status" value="1"/>
</dbReference>
<dbReference type="PANTHER" id="PTHR22602">
    <property type="entry name" value="TRANSFERASE CAF17, MITOCHONDRIAL-RELATED"/>
    <property type="match status" value="1"/>
</dbReference>
<dbReference type="PANTHER" id="PTHR22602:SF0">
    <property type="entry name" value="TRANSFERASE CAF17, MITOCHONDRIAL-RELATED"/>
    <property type="match status" value="1"/>
</dbReference>
<dbReference type="Pfam" id="PF01571">
    <property type="entry name" value="GCV_T"/>
    <property type="match status" value="1"/>
</dbReference>
<dbReference type="Pfam" id="PF21130">
    <property type="entry name" value="YgfZ_barrel"/>
    <property type="match status" value="1"/>
</dbReference>
<dbReference type="SUPFAM" id="SSF101790">
    <property type="entry name" value="Aminomethyltransferase beta-barrel domain"/>
    <property type="match status" value="1"/>
</dbReference>
<dbReference type="SUPFAM" id="SSF103025">
    <property type="entry name" value="Folate-binding domain"/>
    <property type="match status" value="1"/>
</dbReference>
<accession>Q1R7D2</accession>
<feature type="initiator methionine" description="Removed" evidence="1">
    <location>
        <position position="1"/>
    </location>
</feature>
<feature type="chain" id="PRO_0000262889" description="tRNA-modifying protein YgfZ">
    <location>
        <begin position="2"/>
        <end position="326"/>
    </location>
</feature>
<feature type="binding site" evidence="2">
    <location>
        <position position="27"/>
    </location>
    <ligand>
        <name>folate</name>
        <dbReference type="ChEBI" id="CHEBI:62501"/>
    </ligand>
</feature>
<feature type="binding site" evidence="2">
    <location>
        <position position="189"/>
    </location>
    <ligand>
        <name>folate</name>
        <dbReference type="ChEBI" id="CHEBI:62501"/>
    </ligand>
</feature>
<gene>
    <name evidence="2" type="primary">ygfZ</name>
    <name type="ordered locus">UTI89_C3284</name>
</gene>
<organism>
    <name type="scientific">Escherichia coli (strain UTI89 / UPEC)</name>
    <dbReference type="NCBI Taxonomy" id="364106"/>
    <lineage>
        <taxon>Bacteria</taxon>
        <taxon>Pseudomonadati</taxon>
        <taxon>Pseudomonadota</taxon>
        <taxon>Gammaproteobacteria</taxon>
        <taxon>Enterobacterales</taxon>
        <taxon>Enterobacteriaceae</taxon>
        <taxon>Escherichia</taxon>
    </lineage>
</organism>